<gene>
    <name evidence="1" type="primary">efp</name>
    <name type="ordered locus">Noc_2626</name>
</gene>
<protein>
    <recommendedName>
        <fullName evidence="1">Elongation factor P</fullName>
        <shortName evidence="1">EF-P</shortName>
    </recommendedName>
</protein>
<evidence type="ECO:0000255" key="1">
    <source>
        <dbReference type="HAMAP-Rule" id="MF_00141"/>
    </source>
</evidence>
<sequence length="189" mass="20818">MAGYSTSEFKSGLKVMMDGDPYTIMENEFVKPGKGQAFNRVKLRNLKTGRVIDRTFKSGDSLEAADVIETQLQYLYSDGEFWHLMSPETYEQYSADAAAVGDSTKWLKEQDTCTVTLWNGAPLLVSPPNFVTLKVTETDPGIRGDTSGGGSKPATLETGAVVRVPLFIDVGEMLKIDTRTGEYVERAKE</sequence>
<accession>Q3J7W7</accession>
<name>EFP_NITOC</name>
<comment type="function">
    <text evidence="1">Involved in peptide bond synthesis. Alleviates ribosome stalling that occurs when 3 or more consecutive Pro residues or the sequence PPG is present in a protein, possibly by augmenting the peptidyl transferase activity of the ribosome. Modification of Lys-34 is required for alleviation.</text>
</comment>
<comment type="pathway">
    <text evidence="1">Protein biosynthesis; polypeptide chain elongation.</text>
</comment>
<comment type="subcellular location">
    <subcellularLocation>
        <location evidence="1">Cytoplasm</location>
    </subcellularLocation>
</comment>
<comment type="PTM">
    <text evidence="1">May be beta-lysylated on the epsilon-amino group of Lys-34 by the combined action of EpmA and EpmB, and then hydroxylated on the C5 position of the same residue by EpmC (if this protein is present). Lysylation is critical for the stimulatory effect of EF-P on peptide-bond formation. The lysylation moiety may extend toward the peptidyltransferase center and stabilize the terminal 3-CCA end of the tRNA. Hydroxylation of the C5 position on Lys-34 may allow additional potential stabilizing hydrogen-bond interactions with the P-tRNA.</text>
</comment>
<comment type="similarity">
    <text evidence="1">Belongs to the elongation factor P family.</text>
</comment>
<keyword id="KW-0963">Cytoplasm</keyword>
<keyword id="KW-0251">Elongation factor</keyword>
<keyword id="KW-0379">Hydroxylation</keyword>
<keyword id="KW-0648">Protein biosynthesis</keyword>
<keyword id="KW-1185">Reference proteome</keyword>
<organism>
    <name type="scientific">Nitrosococcus oceani (strain ATCC 19707 / BCRC 17464 / JCM 30415 / NCIMB 11848 / C-107)</name>
    <dbReference type="NCBI Taxonomy" id="323261"/>
    <lineage>
        <taxon>Bacteria</taxon>
        <taxon>Pseudomonadati</taxon>
        <taxon>Pseudomonadota</taxon>
        <taxon>Gammaproteobacteria</taxon>
        <taxon>Chromatiales</taxon>
        <taxon>Chromatiaceae</taxon>
        <taxon>Nitrosococcus</taxon>
    </lineage>
</organism>
<dbReference type="EMBL" id="CP000127">
    <property type="protein sequence ID" value="ABA59079.1"/>
    <property type="molecule type" value="Genomic_DNA"/>
</dbReference>
<dbReference type="RefSeq" id="WP_002812582.1">
    <property type="nucleotide sequence ID" value="NC_007484.1"/>
</dbReference>
<dbReference type="SMR" id="Q3J7W7"/>
<dbReference type="FunCoup" id="Q3J7W7">
    <property type="interactions" value="558"/>
</dbReference>
<dbReference type="STRING" id="323261.Noc_2626"/>
<dbReference type="KEGG" id="noc:Noc_2626"/>
<dbReference type="eggNOG" id="COG0231">
    <property type="taxonomic scope" value="Bacteria"/>
</dbReference>
<dbReference type="HOGENOM" id="CLU_074944_0_0_6"/>
<dbReference type="InParanoid" id="Q3J7W7"/>
<dbReference type="UniPathway" id="UPA00345"/>
<dbReference type="Proteomes" id="UP000006838">
    <property type="component" value="Chromosome"/>
</dbReference>
<dbReference type="GO" id="GO:0005737">
    <property type="term" value="C:cytoplasm"/>
    <property type="evidence" value="ECO:0007669"/>
    <property type="project" value="UniProtKB-SubCell"/>
</dbReference>
<dbReference type="GO" id="GO:0003746">
    <property type="term" value="F:translation elongation factor activity"/>
    <property type="evidence" value="ECO:0007669"/>
    <property type="project" value="UniProtKB-UniRule"/>
</dbReference>
<dbReference type="GO" id="GO:0043043">
    <property type="term" value="P:peptide biosynthetic process"/>
    <property type="evidence" value="ECO:0007669"/>
    <property type="project" value="InterPro"/>
</dbReference>
<dbReference type="CDD" id="cd04470">
    <property type="entry name" value="S1_EF-P_repeat_1"/>
    <property type="match status" value="1"/>
</dbReference>
<dbReference type="CDD" id="cd05794">
    <property type="entry name" value="S1_EF-P_repeat_2"/>
    <property type="match status" value="1"/>
</dbReference>
<dbReference type="FunFam" id="2.30.30.30:FF:000003">
    <property type="entry name" value="Elongation factor P"/>
    <property type="match status" value="1"/>
</dbReference>
<dbReference type="FunFam" id="2.40.50.140:FF:000004">
    <property type="entry name" value="Elongation factor P"/>
    <property type="match status" value="1"/>
</dbReference>
<dbReference type="FunFam" id="2.40.50.140:FF:000009">
    <property type="entry name" value="Elongation factor P"/>
    <property type="match status" value="1"/>
</dbReference>
<dbReference type="Gene3D" id="2.30.30.30">
    <property type="match status" value="1"/>
</dbReference>
<dbReference type="Gene3D" id="2.40.50.140">
    <property type="entry name" value="Nucleic acid-binding proteins"/>
    <property type="match status" value="2"/>
</dbReference>
<dbReference type="HAMAP" id="MF_00141">
    <property type="entry name" value="EF_P"/>
    <property type="match status" value="1"/>
</dbReference>
<dbReference type="InterPro" id="IPR015365">
    <property type="entry name" value="Elong-fact-P_C"/>
</dbReference>
<dbReference type="InterPro" id="IPR012340">
    <property type="entry name" value="NA-bd_OB-fold"/>
</dbReference>
<dbReference type="InterPro" id="IPR014722">
    <property type="entry name" value="Rib_uL2_dom2"/>
</dbReference>
<dbReference type="InterPro" id="IPR020599">
    <property type="entry name" value="Transl_elong_fac_P/YeiP"/>
</dbReference>
<dbReference type="InterPro" id="IPR013185">
    <property type="entry name" value="Transl_elong_KOW-like"/>
</dbReference>
<dbReference type="InterPro" id="IPR001059">
    <property type="entry name" value="Transl_elong_P/YeiP_cen"/>
</dbReference>
<dbReference type="InterPro" id="IPR013852">
    <property type="entry name" value="Transl_elong_P/YeiP_CS"/>
</dbReference>
<dbReference type="InterPro" id="IPR011768">
    <property type="entry name" value="Transl_elongation_fac_P"/>
</dbReference>
<dbReference type="InterPro" id="IPR008991">
    <property type="entry name" value="Translation_prot_SH3-like_sf"/>
</dbReference>
<dbReference type="NCBIfam" id="TIGR00038">
    <property type="entry name" value="efp"/>
    <property type="match status" value="1"/>
</dbReference>
<dbReference type="NCBIfam" id="NF001810">
    <property type="entry name" value="PRK00529.1"/>
    <property type="match status" value="1"/>
</dbReference>
<dbReference type="PANTHER" id="PTHR30053">
    <property type="entry name" value="ELONGATION FACTOR P"/>
    <property type="match status" value="1"/>
</dbReference>
<dbReference type="PANTHER" id="PTHR30053:SF12">
    <property type="entry name" value="ELONGATION FACTOR P (EF-P) FAMILY PROTEIN"/>
    <property type="match status" value="1"/>
</dbReference>
<dbReference type="Pfam" id="PF01132">
    <property type="entry name" value="EFP"/>
    <property type="match status" value="1"/>
</dbReference>
<dbReference type="Pfam" id="PF08207">
    <property type="entry name" value="EFP_N"/>
    <property type="match status" value="1"/>
</dbReference>
<dbReference type="Pfam" id="PF09285">
    <property type="entry name" value="Elong-fact-P_C"/>
    <property type="match status" value="1"/>
</dbReference>
<dbReference type="PIRSF" id="PIRSF005901">
    <property type="entry name" value="EF-P"/>
    <property type="match status" value="1"/>
</dbReference>
<dbReference type="SMART" id="SM01185">
    <property type="entry name" value="EFP"/>
    <property type="match status" value="1"/>
</dbReference>
<dbReference type="SMART" id="SM00841">
    <property type="entry name" value="Elong-fact-P_C"/>
    <property type="match status" value="1"/>
</dbReference>
<dbReference type="SUPFAM" id="SSF50249">
    <property type="entry name" value="Nucleic acid-binding proteins"/>
    <property type="match status" value="2"/>
</dbReference>
<dbReference type="SUPFAM" id="SSF50104">
    <property type="entry name" value="Translation proteins SH3-like domain"/>
    <property type="match status" value="1"/>
</dbReference>
<dbReference type="PROSITE" id="PS01275">
    <property type="entry name" value="EFP"/>
    <property type="match status" value="1"/>
</dbReference>
<feature type="chain" id="PRO_1000010794" description="Elongation factor P">
    <location>
        <begin position="1"/>
        <end position="189"/>
    </location>
</feature>
<feature type="modified residue" description="N6-(3,6-diaminohexanoyl)-5-hydroxylysine" evidence="1">
    <location>
        <position position="34"/>
    </location>
</feature>
<reference key="1">
    <citation type="journal article" date="2006" name="Appl. Environ. Microbiol.">
        <title>Complete genome sequence of the marine, chemolithoautotrophic, ammonia-oxidizing bacterium Nitrosococcus oceani ATCC 19707.</title>
        <authorList>
            <person name="Klotz M.G."/>
            <person name="Arp D.J."/>
            <person name="Chain P.S.G."/>
            <person name="El-Sheikh A.F."/>
            <person name="Hauser L.J."/>
            <person name="Hommes N.G."/>
            <person name="Larimer F.W."/>
            <person name="Malfatti S.A."/>
            <person name="Norton J.M."/>
            <person name="Poret-Peterson A.T."/>
            <person name="Vergez L.M."/>
            <person name="Ward B.B."/>
        </authorList>
    </citation>
    <scope>NUCLEOTIDE SEQUENCE [LARGE SCALE GENOMIC DNA]</scope>
    <source>
        <strain>ATCC 19707 / BCRC 17464 / JCM 30415 / NCIMB 11848 / C-107</strain>
    </source>
</reference>
<proteinExistence type="inferred from homology"/>